<feature type="chain" id="PRO_0000162900" description="Protoheme IX farnesyltransferase">
    <location>
        <begin position="1"/>
        <end position="288"/>
    </location>
</feature>
<feature type="transmembrane region" description="Helical" evidence="1">
    <location>
        <begin position="6"/>
        <end position="26"/>
    </location>
</feature>
<feature type="transmembrane region" description="Helical" evidence="1">
    <location>
        <begin position="44"/>
        <end position="64"/>
    </location>
</feature>
<feature type="transmembrane region" description="Helical" evidence="1">
    <location>
        <begin position="89"/>
        <end position="109"/>
    </location>
</feature>
<feature type="transmembrane region" description="Helical" evidence="1">
    <location>
        <begin position="111"/>
        <end position="131"/>
    </location>
</feature>
<feature type="transmembrane region" description="Helical" evidence="1">
    <location>
        <begin position="138"/>
        <end position="158"/>
    </location>
</feature>
<feature type="transmembrane region" description="Helical" evidence="1">
    <location>
        <begin position="169"/>
        <end position="189"/>
    </location>
</feature>
<feature type="transmembrane region" description="Helical" evidence="1">
    <location>
        <begin position="213"/>
        <end position="233"/>
    </location>
</feature>
<feature type="transmembrane region" description="Helical" evidence="1">
    <location>
        <begin position="238"/>
        <end position="258"/>
    </location>
</feature>
<feature type="transmembrane region" description="Helical" evidence="1">
    <location>
        <begin position="268"/>
        <end position="288"/>
    </location>
</feature>
<organism>
    <name type="scientific">Buchnera aphidicola subsp. Baizongia pistaciae (strain Bp)</name>
    <dbReference type="NCBI Taxonomy" id="224915"/>
    <lineage>
        <taxon>Bacteria</taxon>
        <taxon>Pseudomonadati</taxon>
        <taxon>Pseudomonadota</taxon>
        <taxon>Gammaproteobacteria</taxon>
        <taxon>Enterobacterales</taxon>
        <taxon>Erwiniaceae</taxon>
        <taxon>Buchnera</taxon>
    </lineage>
</organism>
<gene>
    <name evidence="1" type="primary">cyoE</name>
    <name type="ordered locus">bbp_413</name>
</gene>
<protein>
    <recommendedName>
        <fullName evidence="1">Protoheme IX farnesyltransferase</fullName>
        <ecNumber evidence="1">2.5.1.141</ecNumber>
    </recommendedName>
    <alternativeName>
        <fullName evidence="1">Heme B farnesyltransferase</fullName>
    </alternativeName>
    <alternativeName>
        <fullName evidence="1">Heme O synthase</fullName>
    </alternativeName>
</protein>
<name>CYOE_BUCBP</name>
<reference key="1">
    <citation type="journal article" date="2003" name="Proc. Natl. Acad. Sci. U.S.A.">
        <title>Reductive genome evolution in Buchnera aphidicola.</title>
        <authorList>
            <person name="van Ham R.C.H.J."/>
            <person name="Kamerbeek J."/>
            <person name="Palacios C."/>
            <person name="Rausell C."/>
            <person name="Abascal F."/>
            <person name="Bastolla U."/>
            <person name="Fernandez J.M."/>
            <person name="Jimenez L."/>
            <person name="Postigo M."/>
            <person name="Silva F.J."/>
            <person name="Tamames J."/>
            <person name="Viguera E."/>
            <person name="Latorre A."/>
            <person name="Valencia A."/>
            <person name="Moran F."/>
            <person name="Moya A."/>
        </authorList>
    </citation>
    <scope>NUCLEOTIDE SEQUENCE [LARGE SCALE GENOMIC DNA]</scope>
    <source>
        <strain>Bp</strain>
    </source>
</reference>
<keyword id="KW-1003">Cell membrane</keyword>
<keyword id="KW-0350">Heme biosynthesis</keyword>
<keyword id="KW-0472">Membrane</keyword>
<keyword id="KW-1185">Reference proteome</keyword>
<keyword id="KW-0808">Transferase</keyword>
<keyword id="KW-0812">Transmembrane</keyword>
<keyword id="KW-1133">Transmembrane helix</keyword>
<accession>Q89AA7</accession>
<comment type="function">
    <text evidence="1">Converts heme B (protoheme IX) to heme O by substitution of the vinyl group on carbon 2 of heme B porphyrin ring with a hydroxyethyl farnesyl side group.</text>
</comment>
<comment type="catalytic activity">
    <reaction evidence="1">
        <text>heme b + (2E,6E)-farnesyl diphosphate + H2O = Fe(II)-heme o + diphosphate</text>
        <dbReference type="Rhea" id="RHEA:28070"/>
        <dbReference type="ChEBI" id="CHEBI:15377"/>
        <dbReference type="ChEBI" id="CHEBI:33019"/>
        <dbReference type="ChEBI" id="CHEBI:60344"/>
        <dbReference type="ChEBI" id="CHEBI:60530"/>
        <dbReference type="ChEBI" id="CHEBI:175763"/>
        <dbReference type="EC" id="2.5.1.141"/>
    </reaction>
</comment>
<comment type="pathway">
    <text evidence="1">Porphyrin-containing compound metabolism; heme O biosynthesis; heme O from protoheme: step 1/1.</text>
</comment>
<comment type="subcellular location">
    <subcellularLocation>
        <location evidence="1">Cell membrane</location>
        <topology evidence="1">Multi-pass membrane protein</topology>
    </subcellularLocation>
</comment>
<comment type="miscellaneous">
    <text evidence="1">Carbon 2 of the heme B porphyrin ring is defined according to the Fischer nomenclature.</text>
</comment>
<comment type="similarity">
    <text evidence="1">Belongs to the UbiA prenyltransferase family. Protoheme IX farnesyltransferase subfamily.</text>
</comment>
<evidence type="ECO:0000255" key="1">
    <source>
        <dbReference type="HAMAP-Rule" id="MF_00154"/>
    </source>
</evidence>
<sequence>MYYVNVILYLLEVLKPKIILGNLLSLYGGYGVAARGHIYSKLLFLDSLSLFLIVGSACVLNNVIDCDIDKIMLRTQCRLLVKYNKFCKLAILIAMFMLFLGLILCVKFINVVCFCLFLLGWLTYIFLYSFFLKKTSAISTIVGSISGSLPPIVGYCSVTNNFDFCSLNLLIMFALWQIPHSYAICILHFRDYKIANIPVFPVIYGFKITRYHIILHIILFFISVIVLTFINSINYKFLIISFFLCLTWLYYSLLELTIKNSKLWAKNIFRWSIIVIFLLNIIMLFGFV</sequence>
<dbReference type="EC" id="2.5.1.141" evidence="1"/>
<dbReference type="EMBL" id="AE016826">
    <property type="protein sequence ID" value="AAO27123.1"/>
    <property type="molecule type" value="Genomic_DNA"/>
</dbReference>
<dbReference type="SMR" id="Q89AA7"/>
<dbReference type="STRING" id="224915.bbp_413"/>
<dbReference type="KEGG" id="bab:bbp_413"/>
<dbReference type="eggNOG" id="COG0109">
    <property type="taxonomic scope" value="Bacteria"/>
</dbReference>
<dbReference type="HOGENOM" id="CLU_029631_0_0_6"/>
<dbReference type="OrthoDB" id="9814417at2"/>
<dbReference type="UniPathway" id="UPA00834">
    <property type="reaction ID" value="UER00712"/>
</dbReference>
<dbReference type="Proteomes" id="UP000000601">
    <property type="component" value="Chromosome"/>
</dbReference>
<dbReference type="GO" id="GO:0005886">
    <property type="term" value="C:plasma membrane"/>
    <property type="evidence" value="ECO:0007669"/>
    <property type="project" value="UniProtKB-SubCell"/>
</dbReference>
<dbReference type="GO" id="GO:0008495">
    <property type="term" value="F:protoheme IX farnesyltransferase activity"/>
    <property type="evidence" value="ECO:0007669"/>
    <property type="project" value="UniProtKB-UniRule"/>
</dbReference>
<dbReference type="GO" id="GO:0048034">
    <property type="term" value="P:heme O biosynthetic process"/>
    <property type="evidence" value="ECO:0007669"/>
    <property type="project" value="UniProtKB-UniRule"/>
</dbReference>
<dbReference type="CDD" id="cd13957">
    <property type="entry name" value="PT_UbiA_Cox10"/>
    <property type="match status" value="1"/>
</dbReference>
<dbReference type="Gene3D" id="1.10.357.140">
    <property type="entry name" value="UbiA prenyltransferase"/>
    <property type="match status" value="1"/>
</dbReference>
<dbReference type="HAMAP" id="MF_00154">
    <property type="entry name" value="CyoE_CtaB"/>
    <property type="match status" value="1"/>
</dbReference>
<dbReference type="InterPro" id="IPR006369">
    <property type="entry name" value="Protohaem_IX_farnesylTrfase"/>
</dbReference>
<dbReference type="InterPro" id="IPR000537">
    <property type="entry name" value="UbiA_prenyltransferase"/>
</dbReference>
<dbReference type="InterPro" id="IPR030470">
    <property type="entry name" value="UbiA_prenylTrfase_CS"/>
</dbReference>
<dbReference type="InterPro" id="IPR044878">
    <property type="entry name" value="UbiA_sf"/>
</dbReference>
<dbReference type="NCBIfam" id="TIGR01473">
    <property type="entry name" value="cyoE_ctaB"/>
    <property type="match status" value="1"/>
</dbReference>
<dbReference type="PANTHER" id="PTHR43448">
    <property type="entry name" value="PROTOHEME IX FARNESYLTRANSFERASE, MITOCHONDRIAL"/>
    <property type="match status" value="1"/>
</dbReference>
<dbReference type="PANTHER" id="PTHR43448:SF2">
    <property type="entry name" value="PROTOHEME IX FARNESYLTRANSFERASE, MITOCHONDRIAL"/>
    <property type="match status" value="1"/>
</dbReference>
<dbReference type="Pfam" id="PF01040">
    <property type="entry name" value="UbiA"/>
    <property type="match status" value="1"/>
</dbReference>
<dbReference type="PROSITE" id="PS00943">
    <property type="entry name" value="UBIA"/>
    <property type="match status" value="1"/>
</dbReference>
<proteinExistence type="inferred from homology"/>